<protein>
    <recommendedName>
        <fullName>Placenta growth factor</fullName>
        <shortName>PlGF</shortName>
    </recommendedName>
</protein>
<name>PLGF_RAT</name>
<keyword id="KW-0037">Angiogenesis</keyword>
<keyword id="KW-0217">Developmental protein</keyword>
<keyword id="KW-0221">Differentiation</keyword>
<keyword id="KW-0903">Direct protein sequencing</keyword>
<keyword id="KW-1015">Disulfide bond</keyword>
<keyword id="KW-0325">Glycoprotein</keyword>
<keyword id="KW-0339">Growth factor</keyword>
<keyword id="KW-0497">Mitogen</keyword>
<keyword id="KW-1185">Reference proteome</keyword>
<keyword id="KW-0964">Secreted</keyword>
<keyword id="KW-0732">Signal</keyword>
<gene>
    <name type="primary">Pgf</name>
    <name type="synonym">Plgf</name>
</gene>
<evidence type="ECO:0000250" key="1"/>
<evidence type="ECO:0000255" key="2"/>
<evidence type="ECO:0000256" key="3">
    <source>
        <dbReference type="SAM" id="MobiDB-lite"/>
    </source>
</evidence>
<evidence type="ECO:0000305" key="4"/>
<proteinExistence type="evidence at protein level"/>
<dbReference type="EMBL" id="L40030">
    <property type="protein sequence ID" value="AAA97426.1"/>
    <property type="molecule type" value="mRNA"/>
</dbReference>
<dbReference type="EMBL" id="BC087006">
    <property type="protein sequence ID" value="AAH87006.1"/>
    <property type="molecule type" value="mRNA"/>
</dbReference>
<dbReference type="PIR" id="A56125">
    <property type="entry name" value="A56125"/>
</dbReference>
<dbReference type="RefSeq" id="NP_446047.1">
    <property type="nucleotide sequence ID" value="NM_053595.2"/>
</dbReference>
<dbReference type="SMR" id="Q63434"/>
<dbReference type="CORUM" id="Q63434"/>
<dbReference type="FunCoup" id="Q63434">
    <property type="interactions" value="674"/>
</dbReference>
<dbReference type="STRING" id="10116.ENSRNOP00000007790"/>
<dbReference type="GlyCosmos" id="Q63434">
    <property type="glycosylation" value="3 sites, No reported glycans"/>
</dbReference>
<dbReference type="GlyGen" id="Q63434">
    <property type="glycosylation" value="3 sites"/>
</dbReference>
<dbReference type="PhosphoSitePlus" id="Q63434"/>
<dbReference type="PaxDb" id="10116-ENSRNOP00000007790"/>
<dbReference type="GeneID" id="94203"/>
<dbReference type="KEGG" id="rno:94203"/>
<dbReference type="UCSC" id="RGD:619850">
    <property type="organism name" value="rat"/>
</dbReference>
<dbReference type="AGR" id="RGD:619850"/>
<dbReference type="CTD" id="5228"/>
<dbReference type="RGD" id="619850">
    <property type="gene designation" value="Pgf"/>
</dbReference>
<dbReference type="VEuPathDB" id="HostDB:ENSRNOG00000005650"/>
<dbReference type="eggNOG" id="ENOG502S2DE">
    <property type="taxonomic scope" value="Eukaryota"/>
</dbReference>
<dbReference type="HOGENOM" id="CLU_042996_3_0_1"/>
<dbReference type="InParanoid" id="Q63434"/>
<dbReference type="OrthoDB" id="34528at9989"/>
<dbReference type="PhylomeDB" id="Q63434"/>
<dbReference type="TreeFam" id="TF319554"/>
<dbReference type="Reactome" id="R-RNO-194313">
    <property type="pathway name" value="VEGF ligand-receptor interactions"/>
</dbReference>
<dbReference type="Reactome" id="R-RNO-195399">
    <property type="pathway name" value="VEGF binds to VEGFR leading to receptor dimerization"/>
</dbReference>
<dbReference type="PRO" id="PR:Q63434"/>
<dbReference type="Proteomes" id="UP000002494">
    <property type="component" value="Chromosome 6"/>
</dbReference>
<dbReference type="Bgee" id="ENSRNOG00000005650">
    <property type="expression patterns" value="Expressed in skeletal muscle tissue and 17 other cell types or tissues"/>
</dbReference>
<dbReference type="GO" id="GO:0005615">
    <property type="term" value="C:extracellular space"/>
    <property type="evidence" value="ECO:0000314"/>
    <property type="project" value="RGD"/>
</dbReference>
<dbReference type="GO" id="GO:0016020">
    <property type="term" value="C:membrane"/>
    <property type="evidence" value="ECO:0007669"/>
    <property type="project" value="InterPro"/>
</dbReference>
<dbReference type="GO" id="GO:0042056">
    <property type="term" value="F:chemoattractant activity"/>
    <property type="evidence" value="ECO:0000318"/>
    <property type="project" value="GO_Central"/>
</dbReference>
<dbReference type="GO" id="GO:0008083">
    <property type="term" value="F:growth factor activity"/>
    <property type="evidence" value="ECO:0000250"/>
    <property type="project" value="UniProtKB"/>
</dbReference>
<dbReference type="GO" id="GO:0042802">
    <property type="term" value="F:identical protein binding"/>
    <property type="evidence" value="ECO:0000353"/>
    <property type="project" value="RGD"/>
</dbReference>
<dbReference type="GO" id="GO:0044877">
    <property type="term" value="F:protein-containing complex binding"/>
    <property type="evidence" value="ECO:0000314"/>
    <property type="project" value="RGD"/>
</dbReference>
<dbReference type="GO" id="GO:0005172">
    <property type="term" value="F:vascular endothelial growth factor receptor binding"/>
    <property type="evidence" value="ECO:0000318"/>
    <property type="project" value="GO_Central"/>
</dbReference>
<dbReference type="GO" id="GO:0031100">
    <property type="term" value="P:animal organ regeneration"/>
    <property type="evidence" value="ECO:0000270"/>
    <property type="project" value="RGD"/>
</dbReference>
<dbReference type="GO" id="GO:0001658">
    <property type="term" value="P:branching involved in ureteric bud morphogenesis"/>
    <property type="evidence" value="ECO:0000266"/>
    <property type="project" value="RGD"/>
</dbReference>
<dbReference type="GO" id="GO:0030154">
    <property type="term" value="P:cell differentiation"/>
    <property type="evidence" value="ECO:0007669"/>
    <property type="project" value="UniProtKB-KW"/>
</dbReference>
<dbReference type="GO" id="GO:0032870">
    <property type="term" value="P:cellular response to hormone stimulus"/>
    <property type="evidence" value="ECO:0000270"/>
    <property type="project" value="RGD"/>
</dbReference>
<dbReference type="GO" id="GO:0007565">
    <property type="term" value="P:female pregnancy"/>
    <property type="evidence" value="ECO:0000270"/>
    <property type="project" value="RGD"/>
</dbReference>
<dbReference type="GO" id="GO:0010467">
    <property type="term" value="P:gene expression"/>
    <property type="evidence" value="ECO:0000266"/>
    <property type="project" value="RGD"/>
</dbReference>
<dbReference type="GO" id="GO:0005977">
    <property type="term" value="P:glycogen metabolic process"/>
    <property type="evidence" value="ECO:0000266"/>
    <property type="project" value="RGD"/>
</dbReference>
<dbReference type="GO" id="GO:0050930">
    <property type="term" value="P:induction of positive chemotaxis"/>
    <property type="evidence" value="ECO:0000318"/>
    <property type="project" value="GO_Central"/>
</dbReference>
<dbReference type="GO" id="GO:0001890">
    <property type="term" value="P:placenta development"/>
    <property type="evidence" value="ECO:0000266"/>
    <property type="project" value="RGD"/>
</dbReference>
<dbReference type="GO" id="GO:0045766">
    <property type="term" value="P:positive regulation of angiogenesis"/>
    <property type="evidence" value="ECO:0000314"/>
    <property type="project" value="RGD"/>
</dbReference>
<dbReference type="GO" id="GO:0051781">
    <property type="term" value="P:positive regulation of cell division"/>
    <property type="evidence" value="ECO:0007669"/>
    <property type="project" value="UniProtKB-KW"/>
</dbReference>
<dbReference type="GO" id="GO:0008284">
    <property type="term" value="P:positive regulation of cell population proliferation"/>
    <property type="evidence" value="ECO:0000250"/>
    <property type="project" value="UniProtKB"/>
</dbReference>
<dbReference type="GO" id="GO:0001938">
    <property type="term" value="P:positive regulation of endothelial cell proliferation"/>
    <property type="evidence" value="ECO:0000315"/>
    <property type="project" value="RGD"/>
</dbReference>
<dbReference type="GO" id="GO:0060754">
    <property type="term" value="P:positive regulation of mast cell chemotaxis"/>
    <property type="evidence" value="ECO:0000318"/>
    <property type="project" value="GO_Central"/>
</dbReference>
<dbReference type="GO" id="GO:0008217">
    <property type="term" value="P:regulation of blood pressure"/>
    <property type="evidence" value="ECO:0000266"/>
    <property type="project" value="RGD"/>
</dbReference>
<dbReference type="GO" id="GO:0060688">
    <property type="term" value="P:regulation of morphogenesis of a branching structure"/>
    <property type="evidence" value="ECO:0000266"/>
    <property type="project" value="RGD"/>
</dbReference>
<dbReference type="GO" id="GO:0001666">
    <property type="term" value="P:response to hypoxia"/>
    <property type="evidence" value="ECO:0000270"/>
    <property type="project" value="RGD"/>
</dbReference>
<dbReference type="GO" id="GO:0009410">
    <property type="term" value="P:response to xenobiotic stimulus"/>
    <property type="evidence" value="ECO:0000270"/>
    <property type="project" value="RGD"/>
</dbReference>
<dbReference type="GO" id="GO:0002040">
    <property type="term" value="P:sprouting angiogenesis"/>
    <property type="evidence" value="ECO:0000314"/>
    <property type="project" value="RGD"/>
</dbReference>
<dbReference type="GO" id="GO:0048010">
    <property type="term" value="P:vascular endothelial growth factor receptor signaling pathway"/>
    <property type="evidence" value="ECO:0000318"/>
    <property type="project" value="GO_Central"/>
</dbReference>
<dbReference type="GO" id="GO:0038084">
    <property type="term" value="P:vascular endothelial growth factor signaling pathway"/>
    <property type="evidence" value="ECO:0000318"/>
    <property type="project" value="GO_Central"/>
</dbReference>
<dbReference type="CDD" id="cd00135">
    <property type="entry name" value="PDGF"/>
    <property type="match status" value="1"/>
</dbReference>
<dbReference type="FunFam" id="2.10.90.10:FF:000055">
    <property type="entry name" value="Placenta growth factor"/>
    <property type="match status" value="1"/>
</dbReference>
<dbReference type="Gene3D" id="2.10.90.10">
    <property type="entry name" value="Cystine-knot cytokines"/>
    <property type="match status" value="1"/>
</dbReference>
<dbReference type="InterPro" id="IPR029034">
    <property type="entry name" value="Cystine-knot_cytokine"/>
</dbReference>
<dbReference type="InterPro" id="IPR023581">
    <property type="entry name" value="PD_growth_factor_CS"/>
</dbReference>
<dbReference type="InterPro" id="IPR000072">
    <property type="entry name" value="PDGF/VEGF_dom"/>
</dbReference>
<dbReference type="InterPro" id="IPR050507">
    <property type="entry name" value="PDGF/VEGF_growth_factor"/>
</dbReference>
<dbReference type="PANTHER" id="PTHR12025:SF9">
    <property type="entry name" value="PLACENTA GROWTH FACTOR"/>
    <property type="match status" value="1"/>
</dbReference>
<dbReference type="PANTHER" id="PTHR12025">
    <property type="entry name" value="VASCULAR ENDOTHELIAL GROWTH FACTOR"/>
    <property type="match status" value="1"/>
</dbReference>
<dbReference type="Pfam" id="PF00341">
    <property type="entry name" value="PDGF"/>
    <property type="match status" value="1"/>
</dbReference>
<dbReference type="SMART" id="SM00141">
    <property type="entry name" value="PDGF"/>
    <property type="match status" value="1"/>
</dbReference>
<dbReference type="SUPFAM" id="SSF57501">
    <property type="entry name" value="Cystine-knot cytokines"/>
    <property type="match status" value="1"/>
</dbReference>
<dbReference type="PROSITE" id="PS00249">
    <property type="entry name" value="PDGF_1"/>
    <property type="match status" value="1"/>
</dbReference>
<dbReference type="PROSITE" id="PS50278">
    <property type="entry name" value="PDGF_2"/>
    <property type="match status" value="1"/>
</dbReference>
<accession>Q63434</accession>
<organism>
    <name type="scientific">Rattus norvegicus</name>
    <name type="common">Rat</name>
    <dbReference type="NCBI Taxonomy" id="10116"/>
    <lineage>
        <taxon>Eukaryota</taxon>
        <taxon>Metazoa</taxon>
        <taxon>Chordata</taxon>
        <taxon>Craniata</taxon>
        <taxon>Vertebrata</taxon>
        <taxon>Euteleostomi</taxon>
        <taxon>Mammalia</taxon>
        <taxon>Eutheria</taxon>
        <taxon>Euarchontoglires</taxon>
        <taxon>Glires</taxon>
        <taxon>Rodentia</taxon>
        <taxon>Myomorpha</taxon>
        <taxon>Muroidea</taxon>
        <taxon>Muridae</taxon>
        <taxon>Murinae</taxon>
        <taxon>Rattus</taxon>
    </lineage>
</organism>
<feature type="signal peptide" description="Or 26">
    <location>
        <begin position="1"/>
        <end position="23"/>
    </location>
</feature>
<feature type="chain" id="PRO_0000023422" description="Placenta growth factor">
    <location>
        <begin position="24"/>
        <end position="158"/>
    </location>
</feature>
<feature type="region of interest" description="Disordered" evidence="3">
    <location>
        <begin position="136"/>
        <end position="158"/>
    </location>
</feature>
<feature type="compositionally biased region" description="Basic residues" evidence="3">
    <location>
        <begin position="137"/>
        <end position="148"/>
    </location>
</feature>
<feature type="glycosylation site" description="N-linked (GlcNAc...) asparagine" evidence="2">
    <location>
        <position position="29"/>
    </location>
</feature>
<feature type="glycosylation site" description="N-linked (GlcNAc...) asparagine">
    <location>
        <position position="30"/>
    </location>
</feature>
<feature type="glycosylation site" description="N-linked (GlcNAc...) asparagine">
    <location>
        <position position="97"/>
    </location>
</feature>
<feature type="disulfide bond" evidence="1">
    <location>
        <begin position="48"/>
        <end position="90"/>
    </location>
</feature>
<feature type="disulfide bond" description="Interchain" evidence="1">
    <location>
        <position position="73"/>
    </location>
</feature>
<feature type="disulfide bond" evidence="1">
    <location>
        <begin position="79"/>
        <end position="125"/>
    </location>
</feature>
<feature type="disulfide bond" description="Interchain" evidence="1">
    <location>
        <position position="82"/>
    </location>
</feature>
<feature type="disulfide bond" evidence="1">
    <location>
        <begin position="83"/>
        <end position="127"/>
    </location>
</feature>
<sequence length="158" mass="17681">MLAMKLFTCFLQVLAGLAVHSQGALSAGNNSTEMEVVPFNEVWGRSYCRPMEKLVYIADEHPNEVSHIFSPSCVLLSRCSGCCGDEGLHCVALKTANITMQILKIPPNRDPHSYVEMTFSQDVLCECRPILETTKAERRKTKGKRKQSKTPQTEEPHL</sequence>
<comment type="function">
    <text evidence="1">Growth factor active in angiogenesis and endothelial cell growth, stimulating their proliferation and migration. It binds to the receptor FLT1/VEGFR-1. Also promotes cell tumor growth (By similarity).</text>
</comment>
<comment type="subunit">
    <text>Antiparallel homodimer; disulfide-linked. Also found as heterodimer with VEGFA/VEGF.</text>
</comment>
<comment type="subcellular location">
    <subcellularLocation>
        <location evidence="1">Secreted</location>
    </subcellularLocation>
</comment>
<comment type="similarity">
    <text evidence="4">Belongs to the PDGF/VEGF growth factor family.</text>
</comment>
<reference key="1">
    <citation type="journal article" date="1995" name="J. Biol. Chem.">
        <title>Purification and characterization of a naturally occurring vascular endothelial growth factor.placenta growth factor heterodimer.</title>
        <authorList>
            <person name="DiSalvo J."/>
            <person name="Bayne M.L."/>
            <person name="Conn G."/>
            <person name="Kwok P.W."/>
            <person name="Trivedi P.G."/>
            <person name="Soderman D.D."/>
            <person name="Palisi T.M."/>
            <person name="Sullivan K.A."/>
            <person name="Thomas K.A."/>
        </authorList>
    </citation>
    <scope>NUCLEOTIDE SEQUENCE [MRNA]</scope>
    <scope>PARTIAL PROTEIN SEQUENCE</scope>
    <scope>HETERODIMERIZATION WITH VEGFA</scope>
</reference>
<reference key="2">
    <citation type="journal article" date="2004" name="Genome Res.">
        <title>The status, quality, and expansion of the NIH full-length cDNA project: the Mammalian Gene Collection (MGC).</title>
        <authorList>
            <consortium name="The MGC Project Team"/>
        </authorList>
    </citation>
    <scope>NUCLEOTIDE SEQUENCE [LARGE SCALE MRNA]</scope>
    <source>
        <tissue>Heart</tissue>
    </source>
</reference>